<gene>
    <name evidence="1" type="primary">glmU</name>
    <name type="ordered locus">E2348C_4040</name>
</gene>
<feature type="chain" id="PRO_1000186441" description="Bifunctional protein GlmU">
    <location>
        <begin position="1"/>
        <end position="456"/>
    </location>
</feature>
<feature type="region of interest" description="Pyrophosphorylase" evidence="1">
    <location>
        <begin position="1"/>
        <end position="229"/>
    </location>
</feature>
<feature type="region of interest" description="Linker" evidence="1">
    <location>
        <begin position="230"/>
        <end position="250"/>
    </location>
</feature>
<feature type="region of interest" description="N-acetyltransferase" evidence="1">
    <location>
        <begin position="251"/>
        <end position="456"/>
    </location>
</feature>
<feature type="active site" description="Proton acceptor" evidence="1">
    <location>
        <position position="363"/>
    </location>
</feature>
<feature type="binding site" evidence="1">
    <location>
        <begin position="11"/>
        <end position="14"/>
    </location>
    <ligand>
        <name>UDP-N-acetyl-alpha-D-glucosamine</name>
        <dbReference type="ChEBI" id="CHEBI:57705"/>
    </ligand>
</feature>
<feature type="binding site" evidence="1">
    <location>
        <position position="25"/>
    </location>
    <ligand>
        <name>UDP-N-acetyl-alpha-D-glucosamine</name>
        <dbReference type="ChEBI" id="CHEBI:57705"/>
    </ligand>
</feature>
<feature type="binding site" evidence="1">
    <location>
        <position position="76"/>
    </location>
    <ligand>
        <name>UDP-N-acetyl-alpha-D-glucosamine</name>
        <dbReference type="ChEBI" id="CHEBI:57705"/>
    </ligand>
</feature>
<feature type="binding site" evidence="1">
    <location>
        <begin position="81"/>
        <end position="82"/>
    </location>
    <ligand>
        <name>UDP-N-acetyl-alpha-D-glucosamine</name>
        <dbReference type="ChEBI" id="CHEBI:57705"/>
    </ligand>
</feature>
<feature type="binding site" evidence="1">
    <location>
        <begin position="103"/>
        <end position="105"/>
    </location>
    <ligand>
        <name>UDP-N-acetyl-alpha-D-glucosamine</name>
        <dbReference type="ChEBI" id="CHEBI:57705"/>
    </ligand>
</feature>
<feature type="binding site" evidence="1">
    <location>
        <position position="105"/>
    </location>
    <ligand>
        <name>Mg(2+)</name>
        <dbReference type="ChEBI" id="CHEBI:18420"/>
    </ligand>
</feature>
<feature type="binding site" evidence="1">
    <location>
        <position position="140"/>
    </location>
    <ligand>
        <name>UDP-N-acetyl-alpha-D-glucosamine</name>
        <dbReference type="ChEBI" id="CHEBI:57705"/>
    </ligand>
</feature>
<feature type="binding site" evidence="1">
    <location>
        <position position="154"/>
    </location>
    <ligand>
        <name>UDP-N-acetyl-alpha-D-glucosamine</name>
        <dbReference type="ChEBI" id="CHEBI:57705"/>
    </ligand>
</feature>
<feature type="binding site" evidence="1">
    <location>
        <position position="169"/>
    </location>
    <ligand>
        <name>UDP-N-acetyl-alpha-D-glucosamine</name>
        <dbReference type="ChEBI" id="CHEBI:57705"/>
    </ligand>
</feature>
<feature type="binding site" evidence="1">
    <location>
        <position position="227"/>
    </location>
    <ligand>
        <name>Mg(2+)</name>
        <dbReference type="ChEBI" id="CHEBI:18420"/>
    </ligand>
</feature>
<feature type="binding site" evidence="1">
    <location>
        <position position="227"/>
    </location>
    <ligand>
        <name>UDP-N-acetyl-alpha-D-glucosamine</name>
        <dbReference type="ChEBI" id="CHEBI:57705"/>
    </ligand>
</feature>
<feature type="binding site" evidence="1">
    <location>
        <position position="333"/>
    </location>
    <ligand>
        <name>UDP-N-acetyl-alpha-D-glucosamine</name>
        <dbReference type="ChEBI" id="CHEBI:57705"/>
    </ligand>
</feature>
<feature type="binding site" evidence="1">
    <location>
        <position position="351"/>
    </location>
    <ligand>
        <name>UDP-N-acetyl-alpha-D-glucosamine</name>
        <dbReference type="ChEBI" id="CHEBI:57705"/>
    </ligand>
</feature>
<feature type="binding site" evidence="1">
    <location>
        <position position="366"/>
    </location>
    <ligand>
        <name>UDP-N-acetyl-alpha-D-glucosamine</name>
        <dbReference type="ChEBI" id="CHEBI:57705"/>
    </ligand>
</feature>
<feature type="binding site" evidence="1">
    <location>
        <position position="377"/>
    </location>
    <ligand>
        <name>UDP-N-acetyl-alpha-D-glucosamine</name>
        <dbReference type="ChEBI" id="CHEBI:57705"/>
    </ligand>
</feature>
<feature type="binding site" evidence="1">
    <location>
        <position position="380"/>
    </location>
    <ligand>
        <name>acetyl-CoA</name>
        <dbReference type="ChEBI" id="CHEBI:57288"/>
    </ligand>
</feature>
<feature type="binding site" evidence="1">
    <location>
        <begin position="386"/>
        <end position="387"/>
    </location>
    <ligand>
        <name>acetyl-CoA</name>
        <dbReference type="ChEBI" id="CHEBI:57288"/>
    </ligand>
</feature>
<feature type="binding site" evidence="1">
    <location>
        <position position="405"/>
    </location>
    <ligand>
        <name>acetyl-CoA</name>
        <dbReference type="ChEBI" id="CHEBI:57288"/>
    </ligand>
</feature>
<feature type="binding site" evidence="1">
    <location>
        <position position="423"/>
    </location>
    <ligand>
        <name>acetyl-CoA</name>
        <dbReference type="ChEBI" id="CHEBI:57288"/>
    </ligand>
</feature>
<feature type="binding site" evidence="1">
    <location>
        <position position="440"/>
    </location>
    <ligand>
        <name>acetyl-CoA</name>
        <dbReference type="ChEBI" id="CHEBI:57288"/>
    </ligand>
</feature>
<evidence type="ECO:0000255" key="1">
    <source>
        <dbReference type="HAMAP-Rule" id="MF_01631"/>
    </source>
</evidence>
<accession>B7UMJ5</accession>
<organism>
    <name type="scientific">Escherichia coli O127:H6 (strain E2348/69 / EPEC)</name>
    <dbReference type="NCBI Taxonomy" id="574521"/>
    <lineage>
        <taxon>Bacteria</taxon>
        <taxon>Pseudomonadati</taxon>
        <taxon>Pseudomonadota</taxon>
        <taxon>Gammaproteobacteria</taxon>
        <taxon>Enterobacterales</taxon>
        <taxon>Enterobacteriaceae</taxon>
        <taxon>Escherichia</taxon>
    </lineage>
</organism>
<protein>
    <recommendedName>
        <fullName evidence="1">Bifunctional protein GlmU</fullName>
    </recommendedName>
    <domain>
        <recommendedName>
            <fullName evidence="1">UDP-N-acetylglucosamine pyrophosphorylase</fullName>
            <ecNumber evidence="1">2.7.7.23</ecNumber>
        </recommendedName>
        <alternativeName>
            <fullName evidence="1">N-acetylglucosamine-1-phosphate uridyltransferase</fullName>
        </alternativeName>
    </domain>
    <domain>
        <recommendedName>
            <fullName evidence="1">Glucosamine-1-phosphate N-acetyltransferase</fullName>
            <ecNumber evidence="1">2.3.1.157</ecNumber>
        </recommendedName>
    </domain>
</protein>
<proteinExistence type="inferred from homology"/>
<sequence>MLNNAMSVVILAAGKGTRMYSDLPKVLHTLAGKTMVQHVIDAANELGAAHVHLVYGHGGDLLKQALKNDNLNWVLQAEQLGTGHAMQQAAPFFADDEDILMLYGDVPLISVETLQRLRDAKPQGGIGLLTVKLDDPTGYGRITRENGKVTGIVEHKDATDEQRQIQEINTGILIANGADMKRWLAKLTNNNAQGEYYITDIIALAYQEGREIVAVHPQRLSEVEGVNNRLQLSRLERVYQSEQAEKLLLAGVMLRDPARFDLRGTLTHGRDVEIDTNVIIEGNVTLGHRVKIGAGCVIKNSVIGDDCEISPYTVVEDANLAAACTIGPFARLRPGAELLEGAHVGNFVEMKKARLGKGSKAGHLTYLGDAEIGDNVNIGAGTITCNYDGANKFKTIIGDDVFVGSDTQLVAPVTVGKGATIAAGTTVTRNIGENALAISRVPQAQKEGWRRPVKKK</sequence>
<name>GLMU_ECO27</name>
<reference key="1">
    <citation type="journal article" date="2009" name="J. Bacteriol.">
        <title>Complete genome sequence and comparative genome analysis of enteropathogenic Escherichia coli O127:H6 strain E2348/69.</title>
        <authorList>
            <person name="Iguchi A."/>
            <person name="Thomson N.R."/>
            <person name="Ogura Y."/>
            <person name="Saunders D."/>
            <person name="Ooka T."/>
            <person name="Henderson I.R."/>
            <person name="Harris D."/>
            <person name="Asadulghani M."/>
            <person name="Kurokawa K."/>
            <person name="Dean P."/>
            <person name="Kenny B."/>
            <person name="Quail M.A."/>
            <person name="Thurston S."/>
            <person name="Dougan G."/>
            <person name="Hayashi T."/>
            <person name="Parkhill J."/>
            <person name="Frankel G."/>
        </authorList>
    </citation>
    <scope>NUCLEOTIDE SEQUENCE [LARGE SCALE GENOMIC DNA]</scope>
    <source>
        <strain>E2348/69 / EPEC</strain>
    </source>
</reference>
<keyword id="KW-0012">Acyltransferase</keyword>
<keyword id="KW-0133">Cell shape</keyword>
<keyword id="KW-0961">Cell wall biogenesis/degradation</keyword>
<keyword id="KW-0963">Cytoplasm</keyword>
<keyword id="KW-0460">Magnesium</keyword>
<keyword id="KW-0479">Metal-binding</keyword>
<keyword id="KW-0511">Multifunctional enzyme</keyword>
<keyword id="KW-0548">Nucleotidyltransferase</keyword>
<keyword id="KW-0573">Peptidoglycan synthesis</keyword>
<keyword id="KW-1185">Reference proteome</keyword>
<keyword id="KW-0677">Repeat</keyword>
<keyword id="KW-0808">Transferase</keyword>
<dbReference type="EC" id="2.7.7.23" evidence="1"/>
<dbReference type="EC" id="2.3.1.157" evidence="1"/>
<dbReference type="EMBL" id="FM180568">
    <property type="protein sequence ID" value="CAS11588.1"/>
    <property type="molecule type" value="Genomic_DNA"/>
</dbReference>
<dbReference type="RefSeq" id="WP_000933758.1">
    <property type="nucleotide sequence ID" value="NC_011601.1"/>
</dbReference>
<dbReference type="SMR" id="B7UMJ5"/>
<dbReference type="KEGG" id="ecg:E2348C_4040"/>
<dbReference type="HOGENOM" id="CLU_029499_15_2_6"/>
<dbReference type="UniPathway" id="UPA00113">
    <property type="reaction ID" value="UER00532"/>
</dbReference>
<dbReference type="UniPathway" id="UPA00113">
    <property type="reaction ID" value="UER00533"/>
</dbReference>
<dbReference type="UniPathway" id="UPA00973"/>
<dbReference type="Proteomes" id="UP000008205">
    <property type="component" value="Chromosome"/>
</dbReference>
<dbReference type="GO" id="GO:0005737">
    <property type="term" value="C:cytoplasm"/>
    <property type="evidence" value="ECO:0007669"/>
    <property type="project" value="UniProtKB-SubCell"/>
</dbReference>
<dbReference type="GO" id="GO:0016020">
    <property type="term" value="C:membrane"/>
    <property type="evidence" value="ECO:0007669"/>
    <property type="project" value="GOC"/>
</dbReference>
<dbReference type="GO" id="GO:0019134">
    <property type="term" value="F:glucosamine-1-phosphate N-acetyltransferase activity"/>
    <property type="evidence" value="ECO:0007669"/>
    <property type="project" value="UniProtKB-UniRule"/>
</dbReference>
<dbReference type="GO" id="GO:0000287">
    <property type="term" value="F:magnesium ion binding"/>
    <property type="evidence" value="ECO:0007669"/>
    <property type="project" value="UniProtKB-UniRule"/>
</dbReference>
<dbReference type="GO" id="GO:0003977">
    <property type="term" value="F:UDP-N-acetylglucosamine diphosphorylase activity"/>
    <property type="evidence" value="ECO:0007669"/>
    <property type="project" value="UniProtKB-UniRule"/>
</dbReference>
<dbReference type="GO" id="GO:0000902">
    <property type="term" value="P:cell morphogenesis"/>
    <property type="evidence" value="ECO:0007669"/>
    <property type="project" value="UniProtKB-UniRule"/>
</dbReference>
<dbReference type="GO" id="GO:0071555">
    <property type="term" value="P:cell wall organization"/>
    <property type="evidence" value="ECO:0007669"/>
    <property type="project" value="UniProtKB-KW"/>
</dbReference>
<dbReference type="GO" id="GO:0009245">
    <property type="term" value="P:lipid A biosynthetic process"/>
    <property type="evidence" value="ECO:0007669"/>
    <property type="project" value="UniProtKB-UniRule"/>
</dbReference>
<dbReference type="GO" id="GO:0009252">
    <property type="term" value="P:peptidoglycan biosynthetic process"/>
    <property type="evidence" value="ECO:0007669"/>
    <property type="project" value="UniProtKB-UniRule"/>
</dbReference>
<dbReference type="GO" id="GO:0008360">
    <property type="term" value="P:regulation of cell shape"/>
    <property type="evidence" value="ECO:0007669"/>
    <property type="project" value="UniProtKB-KW"/>
</dbReference>
<dbReference type="GO" id="GO:0006048">
    <property type="term" value="P:UDP-N-acetylglucosamine biosynthetic process"/>
    <property type="evidence" value="ECO:0007669"/>
    <property type="project" value="UniProtKB-UniPathway"/>
</dbReference>
<dbReference type="CDD" id="cd02540">
    <property type="entry name" value="GT2_GlmU_N_bac"/>
    <property type="match status" value="1"/>
</dbReference>
<dbReference type="CDD" id="cd03353">
    <property type="entry name" value="LbH_GlmU_C"/>
    <property type="match status" value="1"/>
</dbReference>
<dbReference type="FunFam" id="2.160.10.10:FF:000011">
    <property type="entry name" value="Bifunctional protein GlmU"/>
    <property type="match status" value="1"/>
</dbReference>
<dbReference type="FunFam" id="3.90.550.10:FF:000006">
    <property type="entry name" value="Bifunctional protein GlmU"/>
    <property type="match status" value="1"/>
</dbReference>
<dbReference type="Gene3D" id="2.160.10.10">
    <property type="entry name" value="Hexapeptide repeat proteins"/>
    <property type="match status" value="1"/>
</dbReference>
<dbReference type="Gene3D" id="3.90.550.10">
    <property type="entry name" value="Spore Coat Polysaccharide Biosynthesis Protein SpsA, Chain A"/>
    <property type="match status" value="1"/>
</dbReference>
<dbReference type="HAMAP" id="MF_01631">
    <property type="entry name" value="GlmU"/>
    <property type="match status" value="1"/>
</dbReference>
<dbReference type="InterPro" id="IPR005882">
    <property type="entry name" value="Bifunctional_GlmU"/>
</dbReference>
<dbReference type="InterPro" id="IPR050065">
    <property type="entry name" value="GlmU-like"/>
</dbReference>
<dbReference type="InterPro" id="IPR038009">
    <property type="entry name" value="GlmU_C_LbH"/>
</dbReference>
<dbReference type="InterPro" id="IPR001451">
    <property type="entry name" value="Hexapep"/>
</dbReference>
<dbReference type="InterPro" id="IPR018357">
    <property type="entry name" value="Hexapep_transf_CS"/>
</dbReference>
<dbReference type="InterPro" id="IPR025877">
    <property type="entry name" value="MobA-like_NTP_Trfase"/>
</dbReference>
<dbReference type="InterPro" id="IPR029044">
    <property type="entry name" value="Nucleotide-diphossugar_trans"/>
</dbReference>
<dbReference type="InterPro" id="IPR011004">
    <property type="entry name" value="Trimer_LpxA-like_sf"/>
</dbReference>
<dbReference type="NCBIfam" id="TIGR01173">
    <property type="entry name" value="glmU"/>
    <property type="match status" value="1"/>
</dbReference>
<dbReference type="NCBIfam" id="NF006986">
    <property type="entry name" value="PRK09451.1"/>
    <property type="match status" value="1"/>
</dbReference>
<dbReference type="PANTHER" id="PTHR43584:SF3">
    <property type="entry name" value="BIFUNCTIONAL PROTEIN GLMU"/>
    <property type="match status" value="1"/>
</dbReference>
<dbReference type="PANTHER" id="PTHR43584">
    <property type="entry name" value="NUCLEOTIDYL TRANSFERASE"/>
    <property type="match status" value="1"/>
</dbReference>
<dbReference type="Pfam" id="PF00132">
    <property type="entry name" value="Hexapep"/>
    <property type="match status" value="2"/>
</dbReference>
<dbReference type="Pfam" id="PF12804">
    <property type="entry name" value="NTP_transf_3"/>
    <property type="match status" value="1"/>
</dbReference>
<dbReference type="SUPFAM" id="SSF53448">
    <property type="entry name" value="Nucleotide-diphospho-sugar transferases"/>
    <property type="match status" value="1"/>
</dbReference>
<dbReference type="SUPFAM" id="SSF51161">
    <property type="entry name" value="Trimeric LpxA-like enzymes"/>
    <property type="match status" value="1"/>
</dbReference>
<dbReference type="PROSITE" id="PS00101">
    <property type="entry name" value="HEXAPEP_TRANSFERASES"/>
    <property type="match status" value="1"/>
</dbReference>
<comment type="function">
    <text evidence="1">Catalyzes the last two sequential reactions in the de novo biosynthetic pathway for UDP-N-acetylglucosamine (UDP-GlcNAc). The C-terminal domain catalyzes the transfer of acetyl group from acetyl coenzyme A to glucosamine-1-phosphate (GlcN-1-P) to produce N-acetylglucosamine-1-phosphate (GlcNAc-1-P), which is converted into UDP-GlcNAc by the transfer of uridine 5-monophosphate (from uridine 5-triphosphate), a reaction catalyzed by the N-terminal domain.</text>
</comment>
<comment type="catalytic activity">
    <reaction evidence="1">
        <text>alpha-D-glucosamine 1-phosphate + acetyl-CoA = N-acetyl-alpha-D-glucosamine 1-phosphate + CoA + H(+)</text>
        <dbReference type="Rhea" id="RHEA:13725"/>
        <dbReference type="ChEBI" id="CHEBI:15378"/>
        <dbReference type="ChEBI" id="CHEBI:57287"/>
        <dbReference type="ChEBI" id="CHEBI:57288"/>
        <dbReference type="ChEBI" id="CHEBI:57776"/>
        <dbReference type="ChEBI" id="CHEBI:58516"/>
        <dbReference type="EC" id="2.3.1.157"/>
    </reaction>
</comment>
<comment type="catalytic activity">
    <reaction evidence="1">
        <text>N-acetyl-alpha-D-glucosamine 1-phosphate + UTP + H(+) = UDP-N-acetyl-alpha-D-glucosamine + diphosphate</text>
        <dbReference type="Rhea" id="RHEA:13509"/>
        <dbReference type="ChEBI" id="CHEBI:15378"/>
        <dbReference type="ChEBI" id="CHEBI:33019"/>
        <dbReference type="ChEBI" id="CHEBI:46398"/>
        <dbReference type="ChEBI" id="CHEBI:57705"/>
        <dbReference type="ChEBI" id="CHEBI:57776"/>
        <dbReference type="EC" id="2.7.7.23"/>
    </reaction>
</comment>
<comment type="cofactor">
    <cofactor evidence="1">
        <name>Mg(2+)</name>
        <dbReference type="ChEBI" id="CHEBI:18420"/>
    </cofactor>
    <text evidence="1">Binds 1 Mg(2+) ion per subunit.</text>
</comment>
<comment type="pathway">
    <text evidence="1">Nucleotide-sugar biosynthesis; UDP-N-acetyl-alpha-D-glucosamine biosynthesis; N-acetyl-alpha-D-glucosamine 1-phosphate from alpha-D-glucosamine 6-phosphate (route II): step 2/2.</text>
</comment>
<comment type="pathway">
    <text evidence="1">Nucleotide-sugar biosynthesis; UDP-N-acetyl-alpha-D-glucosamine biosynthesis; UDP-N-acetyl-alpha-D-glucosamine from N-acetyl-alpha-D-glucosamine 1-phosphate: step 1/1.</text>
</comment>
<comment type="pathway">
    <text evidence="1">Bacterial outer membrane biogenesis; LPS lipid A biosynthesis.</text>
</comment>
<comment type="subunit">
    <text evidence="1">Homotrimer.</text>
</comment>
<comment type="subcellular location">
    <subcellularLocation>
        <location evidence="1">Cytoplasm</location>
    </subcellularLocation>
</comment>
<comment type="similarity">
    <text evidence="1">In the N-terminal section; belongs to the N-acetylglucosamine-1-phosphate uridyltransferase family.</text>
</comment>
<comment type="similarity">
    <text evidence="1">In the C-terminal section; belongs to the transferase hexapeptide repeat family.</text>
</comment>